<protein>
    <recommendedName>
        <fullName evidence="1">ATP synthase epsilon chain</fullName>
    </recommendedName>
    <alternativeName>
        <fullName evidence="1">ATP synthase F1 sector epsilon subunit</fullName>
    </alternativeName>
    <alternativeName>
        <fullName evidence="1">F-ATPase epsilon subunit</fullName>
    </alternativeName>
</protein>
<sequence>MTQMTVQVVTPDGIKYDHHAKCISVTTPDGEMGILPNHINLIAPLQVHEMKIRRGGEDEKVDWIAINGGIIEIKDNVVTVVADSAERDRDIDVSRAERAKLRAEREIAQAETTHNIDEVRRAKVALRRALNRINVSKK</sequence>
<keyword id="KW-0066">ATP synthesis</keyword>
<keyword id="KW-1003">Cell membrane</keyword>
<keyword id="KW-0139">CF(1)</keyword>
<keyword id="KW-0375">Hydrogen ion transport</keyword>
<keyword id="KW-0406">Ion transport</keyword>
<keyword id="KW-0472">Membrane</keyword>
<keyword id="KW-0813">Transport</keyword>
<dbReference type="EMBL" id="CP000003">
    <property type="protein sequence ID" value="AAT86734.1"/>
    <property type="molecule type" value="Genomic_DNA"/>
</dbReference>
<dbReference type="RefSeq" id="WP_002985233.1">
    <property type="nucleotide sequence ID" value="NC_006086.1"/>
</dbReference>
<dbReference type="SMR" id="Q5XCX9"/>
<dbReference type="KEGG" id="spa:M6_Spy0599"/>
<dbReference type="HOGENOM" id="CLU_084338_1_0_9"/>
<dbReference type="Proteomes" id="UP000001167">
    <property type="component" value="Chromosome"/>
</dbReference>
<dbReference type="GO" id="GO:0005886">
    <property type="term" value="C:plasma membrane"/>
    <property type="evidence" value="ECO:0007669"/>
    <property type="project" value="UniProtKB-SubCell"/>
</dbReference>
<dbReference type="GO" id="GO:0045259">
    <property type="term" value="C:proton-transporting ATP synthase complex"/>
    <property type="evidence" value="ECO:0007669"/>
    <property type="project" value="UniProtKB-KW"/>
</dbReference>
<dbReference type="GO" id="GO:0005524">
    <property type="term" value="F:ATP binding"/>
    <property type="evidence" value="ECO:0007669"/>
    <property type="project" value="UniProtKB-UniRule"/>
</dbReference>
<dbReference type="GO" id="GO:0046933">
    <property type="term" value="F:proton-transporting ATP synthase activity, rotational mechanism"/>
    <property type="evidence" value="ECO:0007669"/>
    <property type="project" value="UniProtKB-UniRule"/>
</dbReference>
<dbReference type="CDD" id="cd12152">
    <property type="entry name" value="F1-ATPase_delta"/>
    <property type="match status" value="1"/>
</dbReference>
<dbReference type="Gene3D" id="1.20.5.440">
    <property type="entry name" value="ATP synthase delta/epsilon subunit, C-terminal domain"/>
    <property type="match status" value="1"/>
</dbReference>
<dbReference type="Gene3D" id="2.60.15.10">
    <property type="entry name" value="F0F1 ATP synthase delta/epsilon subunit, N-terminal"/>
    <property type="match status" value="1"/>
</dbReference>
<dbReference type="HAMAP" id="MF_00530">
    <property type="entry name" value="ATP_synth_epsil_bac"/>
    <property type="match status" value="1"/>
</dbReference>
<dbReference type="InterPro" id="IPR001469">
    <property type="entry name" value="ATP_synth_F1_dsu/esu"/>
</dbReference>
<dbReference type="InterPro" id="IPR020546">
    <property type="entry name" value="ATP_synth_F1_dsu/esu_N"/>
</dbReference>
<dbReference type="InterPro" id="IPR020547">
    <property type="entry name" value="ATP_synth_F1_esu_C"/>
</dbReference>
<dbReference type="InterPro" id="IPR036771">
    <property type="entry name" value="ATPsynth_dsu/esu_N"/>
</dbReference>
<dbReference type="NCBIfam" id="TIGR01216">
    <property type="entry name" value="ATP_synt_epsi"/>
    <property type="match status" value="1"/>
</dbReference>
<dbReference type="NCBIfam" id="NF001846">
    <property type="entry name" value="PRK00571.1-3"/>
    <property type="match status" value="1"/>
</dbReference>
<dbReference type="PANTHER" id="PTHR13822">
    <property type="entry name" value="ATP SYNTHASE DELTA/EPSILON CHAIN"/>
    <property type="match status" value="1"/>
</dbReference>
<dbReference type="PANTHER" id="PTHR13822:SF10">
    <property type="entry name" value="ATP SYNTHASE EPSILON CHAIN, CHLOROPLASTIC"/>
    <property type="match status" value="1"/>
</dbReference>
<dbReference type="Pfam" id="PF00401">
    <property type="entry name" value="ATP-synt_DE"/>
    <property type="match status" value="1"/>
</dbReference>
<dbReference type="Pfam" id="PF02823">
    <property type="entry name" value="ATP-synt_DE_N"/>
    <property type="match status" value="1"/>
</dbReference>
<dbReference type="SUPFAM" id="SSF51344">
    <property type="entry name" value="Epsilon subunit of F1F0-ATP synthase N-terminal domain"/>
    <property type="match status" value="1"/>
</dbReference>
<organism>
    <name type="scientific">Streptococcus pyogenes serotype M6 (strain ATCC BAA-946 / MGAS10394)</name>
    <dbReference type="NCBI Taxonomy" id="286636"/>
    <lineage>
        <taxon>Bacteria</taxon>
        <taxon>Bacillati</taxon>
        <taxon>Bacillota</taxon>
        <taxon>Bacilli</taxon>
        <taxon>Lactobacillales</taxon>
        <taxon>Streptococcaceae</taxon>
        <taxon>Streptococcus</taxon>
    </lineage>
</organism>
<name>ATPE_STRP6</name>
<feature type="chain" id="PRO_0000188221" description="ATP synthase epsilon chain">
    <location>
        <begin position="1"/>
        <end position="138"/>
    </location>
</feature>
<gene>
    <name evidence="1" type="primary">atpC</name>
    <name type="ordered locus">M6_Spy0599</name>
</gene>
<reference key="1">
    <citation type="journal article" date="2004" name="J. Infect. Dis.">
        <title>Progress toward characterization of the group A Streptococcus metagenome: complete genome sequence of a macrolide-resistant serotype M6 strain.</title>
        <authorList>
            <person name="Banks D.J."/>
            <person name="Porcella S.F."/>
            <person name="Barbian K.D."/>
            <person name="Beres S.B."/>
            <person name="Philips L.E."/>
            <person name="Voyich J.M."/>
            <person name="DeLeo F.R."/>
            <person name="Martin J.M."/>
            <person name="Somerville G.A."/>
            <person name="Musser J.M."/>
        </authorList>
    </citation>
    <scope>NUCLEOTIDE SEQUENCE [LARGE SCALE GENOMIC DNA]</scope>
    <source>
        <strain>ATCC BAA-946 / MGAS10394</strain>
    </source>
</reference>
<accession>Q5XCX9</accession>
<comment type="function">
    <text evidence="1">Produces ATP from ADP in the presence of a proton gradient across the membrane.</text>
</comment>
<comment type="subunit">
    <text>F-type ATPases have 2 components, CF(1) - the catalytic core - and CF(0) - the membrane proton channel. CF(1) has five subunits: alpha(3), beta(3), gamma(1), delta(1), epsilon(1). CF(0) has three main subunits: a, b and c.</text>
</comment>
<comment type="subcellular location">
    <subcellularLocation>
        <location evidence="1">Cell membrane</location>
        <topology evidence="1">Peripheral membrane protein</topology>
    </subcellularLocation>
</comment>
<comment type="similarity">
    <text evidence="1">Belongs to the ATPase epsilon chain family.</text>
</comment>
<evidence type="ECO:0000255" key="1">
    <source>
        <dbReference type="HAMAP-Rule" id="MF_00530"/>
    </source>
</evidence>
<proteinExistence type="inferred from homology"/>